<gene>
    <name evidence="10" type="primary">vha-12</name>
    <name evidence="10" type="ORF">F20B6.2</name>
</gene>
<feature type="chain" id="PRO_0000144631" description="V-type proton ATPase subunit B 1">
    <location>
        <begin position="1"/>
        <end position="491"/>
    </location>
</feature>
<feature type="binding site" evidence="2">
    <location>
        <position position="380"/>
    </location>
    <ligand>
        <name>ATP</name>
        <dbReference type="ChEBI" id="CHEBI:30616"/>
    </ligand>
</feature>
<feature type="mutagenesis site" description="Uncoordinated. 70% embryos are arrested at the 2- to 3-fold stage. 50% embryos fail to hatch. Fails to clear apoptotic cells during embryogenesis. Embryonic cells exhibit abnormal lysosomes that are filled with dense membranous materials." evidence="6">
    <location>
        <begin position="153"/>
        <end position="491"/>
    </location>
</feature>
<feature type="mutagenesis site" description="Uncoordinated. Resistant to acetylcholinesterase inhibitor aldicarb-induced paralysis. No defect in acetylcholine receptor agonist levamisole-induced paralysis. Synaptic vesicles are less acidic. Prevents intracellular acidification and suppresses neurodegeneration of touch-receptor neurons in a mec-4 (u231) mutant background. Heterozygotes, but not homozygotes, have reduced body length and have defect in shedding the cuticle after the last molt." evidence="5 6">
    <original>A</original>
    <variation>V</variation>
    <location>
        <position position="385"/>
    </location>
</feature>
<dbReference type="EMBL" id="BX284606">
    <property type="protein sequence ID" value="CCD69755.1"/>
    <property type="molecule type" value="Genomic_DNA"/>
</dbReference>
<dbReference type="PIR" id="T34226">
    <property type="entry name" value="T34226"/>
</dbReference>
<dbReference type="RefSeq" id="NP_508711.1">
    <property type="nucleotide sequence ID" value="NM_076310.8"/>
</dbReference>
<dbReference type="SMR" id="Q19626"/>
<dbReference type="BioGRID" id="45627">
    <property type="interactions" value="30"/>
</dbReference>
<dbReference type="FunCoup" id="Q19626">
    <property type="interactions" value="2360"/>
</dbReference>
<dbReference type="IntAct" id="Q19626">
    <property type="interactions" value="1"/>
</dbReference>
<dbReference type="STRING" id="6239.F20B6.2.1"/>
<dbReference type="TCDB" id="3.A.2.2.7">
    <property type="family name" value="the h+- or na+-translocating f-type, v-type and a-type atpase (f-atpase) superfamily"/>
</dbReference>
<dbReference type="PaxDb" id="6239-F20B6.2"/>
<dbReference type="PeptideAtlas" id="Q19626"/>
<dbReference type="EnsemblMetazoa" id="F20B6.2.1">
    <property type="protein sequence ID" value="F20B6.2.1"/>
    <property type="gene ID" value="WBGene00006921"/>
</dbReference>
<dbReference type="GeneID" id="180692"/>
<dbReference type="KEGG" id="cel:CELE_F20B6.2"/>
<dbReference type="UCSC" id="F20B6.2.2">
    <property type="organism name" value="c. elegans"/>
</dbReference>
<dbReference type="AGR" id="WB:WBGene00006921"/>
<dbReference type="CTD" id="180692"/>
<dbReference type="WormBase" id="F20B6.2">
    <property type="protein sequence ID" value="CE04424"/>
    <property type="gene ID" value="WBGene00006921"/>
    <property type="gene designation" value="vha-12"/>
</dbReference>
<dbReference type="eggNOG" id="KOG1351">
    <property type="taxonomic scope" value="Eukaryota"/>
</dbReference>
<dbReference type="GeneTree" id="ENSGT00970000196287"/>
<dbReference type="HOGENOM" id="CLU_022916_0_0_1"/>
<dbReference type="InParanoid" id="Q19626"/>
<dbReference type="OMA" id="EGFKIKP"/>
<dbReference type="OrthoDB" id="1735853at2759"/>
<dbReference type="PhylomeDB" id="Q19626"/>
<dbReference type="Reactome" id="R-CEL-1222556">
    <property type="pathway name" value="ROS and RNS production in phagocytes"/>
</dbReference>
<dbReference type="Reactome" id="R-CEL-77387">
    <property type="pathway name" value="Insulin receptor recycling"/>
</dbReference>
<dbReference type="Reactome" id="R-CEL-917977">
    <property type="pathway name" value="Transferrin endocytosis and recycling"/>
</dbReference>
<dbReference type="Reactome" id="R-CEL-9639288">
    <property type="pathway name" value="Amino acids regulate mTORC1"/>
</dbReference>
<dbReference type="Reactome" id="R-CEL-983712">
    <property type="pathway name" value="Ion channel transport"/>
</dbReference>
<dbReference type="PRO" id="PR:Q19626"/>
<dbReference type="Proteomes" id="UP000001940">
    <property type="component" value="Chromosome X"/>
</dbReference>
<dbReference type="Bgee" id="WBGene00006921">
    <property type="expression patterns" value="Expressed in larva and 4 other cell types or tissues"/>
</dbReference>
<dbReference type="GO" id="GO:0033180">
    <property type="term" value="C:proton-transporting V-type ATPase, V1 domain"/>
    <property type="evidence" value="ECO:0007669"/>
    <property type="project" value="InterPro"/>
</dbReference>
<dbReference type="GO" id="GO:0005524">
    <property type="term" value="F:ATP binding"/>
    <property type="evidence" value="ECO:0007669"/>
    <property type="project" value="UniProtKB-KW"/>
</dbReference>
<dbReference type="GO" id="GO:0046961">
    <property type="term" value="F:proton-transporting ATPase activity, rotational mechanism"/>
    <property type="evidence" value="ECO:0000318"/>
    <property type="project" value="GO_Central"/>
</dbReference>
<dbReference type="GO" id="GO:0046034">
    <property type="term" value="P:ATP metabolic process"/>
    <property type="evidence" value="ECO:0007669"/>
    <property type="project" value="InterPro"/>
</dbReference>
<dbReference type="GO" id="GO:0098609">
    <property type="term" value="P:cell-cell adhesion"/>
    <property type="evidence" value="ECO:0000315"/>
    <property type="project" value="UniProtKB"/>
</dbReference>
<dbReference type="GO" id="GO:0015988">
    <property type="term" value="P:energy coupled proton transmembrane transport, against electrochemical gradient"/>
    <property type="evidence" value="ECO:0000303"/>
    <property type="project" value="UniProtKB"/>
</dbReference>
<dbReference type="GO" id="GO:1904747">
    <property type="term" value="P:positive regulation of apoptotic process involved in development"/>
    <property type="evidence" value="ECO:0000315"/>
    <property type="project" value="UniProtKB"/>
</dbReference>
<dbReference type="GO" id="GO:0001956">
    <property type="term" value="P:positive regulation of neurotransmitter secretion"/>
    <property type="evidence" value="ECO:0000315"/>
    <property type="project" value="UniProtKB"/>
</dbReference>
<dbReference type="GO" id="GO:0043068">
    <property type="term" value="P:positive regulation of programmed cell death"/>
    <property type="evidence" value="ECO:0000315"/>
    <property type="project" value="WormBase"/>
</dbReference>
<dbReference type="GO" id="GO:1902600">
    <property type="term" value="P:proton transmembrane transport"/>
    <property type="evidence" value="ECO:0000303"/>
    <property type="project" value="UniProtKB"/>
</dbReference>
<dbReference type="GO" id="GO:0051453">
    <property type="term" value="P:regulation of intracellular pH"/>
    <property type="evidence" value="ECO:0000315"/>
    <property type="project" value="UniProtKB"/>
</dbReference>
<dbReference type="GO" id="GO:0060142">
    <property type="term" value="P:regulation of syncytium formation by plasma membrane fusion"/>
    <property type="evidence" value="ECO:0000315"/>
    <property type="project" value="WormBase"/>
</dbReference>
<dbReference type="GO" id="GO:0001666">
    <property type="term" value="P:response to hypoxia"/>
    <property type="evidence" value="ECO:0000315"/>
    <property type="project" value="WormBase"/>
</dbReference>
<dbReference type="GO" id="GO:0007035">
    <property type="term" value="P:vacuolar acidification"/>
    <property type="evidence" value="ECO:0000318"/>
    <property type="project" value="GO_Central"/>
</dbReference>
<dbReference type="CDD" id="cd18112">
    <property type="entry name" value="ATP-synt_V_A-type_beta_C"/>
    <property type="match status" value="1"/>
</dbReference>
<dbReference type="CDD" id="cd18118">
    <property type="entry name" value="ATP-synt_V_A-type_beta_N"/>
    <property type="match status" value="1"/>
</dbReference>
<dbReference type="CDD" id="cd01135">
    <property type="entry name" value="V_A-ATPase_B"/>
    <property type="match status" value="1"/>
</dbReference>
<dbReference type="FunFam" id="3.40.50.12240:FF:000001">
    <property type="entry name" value="V-type proton ATPase subunit B, brain"/>
    <property type="match status" value="1"/>
</dbReference>
<dbReference type="Gene3D" id="3.40.50.12240">
    <property type="match status" value="1"/>
</dbReference>
<dbReference type="HAMAP" id="MF_00310">
    <property type="entry name" value="ATP_synth_B_arch"/>
    <property type="match status" value="1"/>
</dbReference>
<dbReference type="InterPro" id="IPR055190">
    <property type="entry name" value="ATP-synt_VA_C"/>
</dbReference>
<dbReference type="InterPro" id="IPR020003">
    <property type="entry name" value="ATPase_a/bsu_AS"/>
</dbReference>
<dbReference type="InterPro" id="IPR004100">
    <property type="entry name" value="ATPase_F1/V1/A1_a/bsu_N"/>
</dbReference>
<dbReference type="InterPro" id="IPR000194">
    <property type="entry name" value="ATPase_F1/V1/A1_a/bsu_nucl-bd"/>
</dbReference>
<dbReference type="InterPro" id="IPR005723">
    <property type="entry name" value="ATPase_V1-cplx_bsu"/>
</dbReference>
<dbReference type="InterPro" id="IPR027417">
    <property type="entry name" value="P-loop_NTPase"/>
</dbReference>
<dbReference type="InterPro" id="IPR022879">
    <property type="entry name" value="V-ATPase_su_B/beta"/>
</dbReference>
<dbReference type="NCBIfam" id="NF003235">
    <property type="entry name" value="PRK04196.1"/>
    <property type="match status" value="1"/>
</dbReference>
<dbReference type="NCBIfam" id="TIGR01040">
    <property type="entry name" value="V-ATPase_V1_B"/>
    <property type="match status" value="1"/>
</dbReference>
<dbReference type="PANTHER" id="PTHR43389">
    <property type="entry name" value="V-TYPE PROTON ATPASE SUBUNIT B"/>
    <property type="match status" value="1"/>
</dbReference>
<dbReference type="PANTHER" id="PTHR43389:SF4">
    <property type="entry name" value="V-TYPE PROTON ATPASE SUBUNIT B"/>
    <property type="match status" value="1"/>
</dbReference>
<dbReference type="Pfam" id="PF00006">
    <property type="entry name" value="ATP-synt_ab"/>
    <property type="match status" value="1"/>
</dbReference>
<dbReference type="Pfam" id="PF02874">
    <property type="entry name" value="ATP-synt_ab_N"/>
    <property type="match status" value="1"/>
</dbReference>
<dbReference type="Pfam" id="PF22919">
    <property type="entry name" value="ATP-synt_VA_C"/>
    <property type="match status" value="1"/>
</dbReference>
<dbReference type="PIRSF" id="PIRSF039114">
    <property type="entry name" value="V-ATPsynth_beta/V-ATPase_B"/>
    <property type="match status" value="1"/>
</dbReference>
<dbReference type="SUPFAM" id="SSF52540">
    <property type="entry name" value="P-loop containing nucleoside triphosphate hydrolases"/>
    <property type="match status" value="1"/>
</dbReference>
<dbReference type="PROSITE" id="PS00152">
    <property type="entry name" value="ATPASE_ALPHA_BETA"/>
    <property type="match status" value="1"/>
</dbReference>
<sequence>MAAVDVNQPITGHKSAIIRNYNTNPRLIYQTVCGVNGPLVILNDVKFPQFSEIVKITLPDGSKRSGQVLEISKNKAVVQVFEGTSGIDAKNTICEFTGDILRTPVSEDMLGRIFNGSGKPIDKGPPVLAEDFLDINGQPINPWSRIYPEEMIQTGISAIDVMNSIARGQKIPIFSASGLPHNEIAAQIVRQGGLVQLPDRPHEQTNFAIVFAAMGVNMETARFFKQDFEENGSMENVCLFLNLANDPTIERIITPRIALTSAEFLAYQCKKHVLVVLTDMSSYAEALREVSAAREEVPGRRGFPGYMYTDLATIYERAGRVEGRDGSITQIPILTMPNDDITHPIPDLTGYITEGQIYVDRQLHNRLIYPPINVLPSLSRLMKSAIGEGMTREDHSDVSNQLYACYAIGKDVQAMKAVVGEEALSSDDLLYLEFLTKFEKNFITQGHYENRSVFESLDIGWQLLRIFPREMLKRIPESTLEKYYPRGGAKE</sequence>
<name>VATB1_CAEEL</name>
<comment type="function">
    <text evidence="1 3 4 5 6 8 9">Non-catalytic subunit of the V1 complex of vacuolar(H+)-ATPase (V-ATPase), a multisubunit enzyme composed of a peripheral complex (V1) that hydrolyzes ATP and a membrane integral complex (V0) that translocates protons (By similarity). V-ATPase is responsible for acidifying and maintaining the pH of intracellular compartments and in some cell types, is targeted to the plasma membrane, where it is responsible for acidifying the extracellular environment (Probable). Essential for the proper assembly and activity of V-ATPase (By similarity). Required maternally for early embryogenesis and zygotically during morphogenesis (PubMed:22426883). Specifically, involved in the clearance of apoptotic cell corpses in embryos (PubMed:22426883). Also, during embryonic development, the V-ATPase is required to repress fusion of epidermal cells probably by negatively regulating eff-1-mediated cell fusion (PubMed:15866168). In neurons, required for necrotic cell death by promoting intracellular acidification (PubMed:16005300). Required for cell death induced by hypoxia (PubMed:16005300). Required for acidification of synaptic vesicles and the release of neurotransmitters from adult neurons (PubMed:22426883).</text>
</comment>
<comment type="subunit">
    <text evidence="3">V-ATPase is a heteromultimeric enzyme made up of two complexes: the ATP-hydrolytic V1 complex and the proton translocation V0 complex (By similarity). The V1 complex consists of three catalytic AB heterodimers that form a heterohexamer, three peripheral stalks each consisting of EG heterodimers, one central rotor including subunits D and F, and the regulatory subunits C and H (By similarity). The proton translocation complex V0 consists of the proton transport subunit a, a ring of proteolipid subunits c9c'', rotary subunit d, subunits e and f, and the accessory subunits vah-19/Ac45 and vah-20/PRR (By similarity).</text>
</comment>
<comment type="tissue specificity">
    <text evidence="6">Expressed ubiquitously (PubMed:22426883). Highly expressed in the H-shaped excretory cell, the excretory pore, the intestine, and hypodermal cells (PubMed:22426883). Expressed in the nervous system (PubMed:22426883). Expressed at low levels in muscles (PubMed:22426883).</text>
</comment>
<comment type="developmental stage">
    <text evidence="6">Expressed in embryos, larvae and adults (PubMed:22426883). In embryos, expression begins at the end of gastrulation after the first cell cleavage (PubMed:22426883).</text>
</comment>
<comment type="disruption phenotype">
    <text evidence="4 5">RNAi-mediated knockdown causes hyperfusion of embryonic epidermal cells (PubMed:15866168). RNAi-mediated knockdown suppresses hypoxia-induced cell death, and, in a mec-4 (u231) mutant background, neurodegeneration of touch-receptor neurons (PubMed:16005300).</text>
</comment>
<comment type="similarity">
    <text evidence="7">Belongs to the ATPase alpha/beta chains family.</text>
</comment>
<organism>
    <name type="scientific">Caenorhabditis elegans</name>
    <dbReference type="NCBI Taxonomy" id="6239"/>
    <lineage>
        <taxon>Eukaryota</taxon>
        <taxon>Metazoa</taxon>
        <taxon>Ecdysozoa</taxon>
        <taxon>Nematoda</taxon>
        <taxon>Chromadorea</taxon>
        <taxon>Rhabditida</taxon>
        <taxon>Rhabditina</taxon>
        <taxon>Rhabditomorpha</taxon>
        <taxon>Rhabditoidea</taxon>
        <taxon>Rhabditidae</taxon>
        <taxon>Peloderinae</taxon>
        <taxon>Caenorhabditis</taxon>
    </lineage>
</organism>
<protein>
    <recommendedName>
        <fullName evidence="7">V-type proton ATPase subunit B 1</fullName>
        <shortName evidence="7">V-ATPase subunit B 1</shortName>
    </recommendedName>
    <alternativeName>
        <fullName evidence="7">Vacuolar proton pump subunit B 1</fullName>
    </alternativeName>
</protein>
<reference key="1">
    <citation type="journal article" date="1998" name="Science">
        <title>Genome sequence of the nematode C. elegans: a platform for investigating biology.</title>
        <authorList>
            <consortium name="The C. elegans sequencing consortium"/>
        </authorList>
    </citation>
    <scope>NUCLEOTIDE SEQUENCE [LARGE SCALE GENOMIC DNA]</scope>
    <source>
        <strain>Bristol N2</strain>
    </source>
</reference>
<reference key="2">
    <citation type="journal article" date="2005" name="Curr. Biol.">
        <title>The vacuolar H+ -ATPase mediates intracellular acidification required for neurodegeneration in C. elegans.</title>
        <authorList>
            <person name="Syntichaki P."/>
            <person name="Samara C."/>
            <person name="Tavernarakis N."/>
        </authorList>
    </citation>
    <scope>FUNCTION</scope>
    <scope>DISRUPTION PHENOTYPE</scope>
</reference>
<reference key="3">
    <citation type="journal article" date="2005" name="Dev. Cell">
        <title>Repression of cell-cell fusion by components of the C. elegans vacuolar ATPase complex.</title>
        <authorList>
            <person name="Kontani K."/>
            <person name="Moskowitz I.P.G."/>
            <person name="Rothman J.H."/>
        </authorList>
    </citation>
    <scope>FUNCTION</scope>
    <scope>DISRUPTION PHENOTYPE</scope>
</reference>
<reference key="4">
    <citation type="journal article" date="2012" name="Genetics">
        <title>V-ATPase V1 sector is required for corpse clearance and neurotransmission in Caenorhabditis elegans.</title>
        <authorList>
            <person name="Ernstrom G.G."/>
            <person name="Weimer R."/>
            <person name="Pawar D.R."/>
            <person name="Watanabe S."/>
            <person name="Hobson R.J."/>
            <person name="Greenstein D."/>
            <person name="Jorgensen E.M."/>
        </authorList>
    </citation>
    <scope>FUNCTION</scope>
    <scope>TISSUE SPECIFICITY</scope>
    <scope>DEVELOPMENTAL STAGE</scope>
    <scope>MUTAGENESIS OF 153-GLN--GLU-491 AND ALA-385</scope>
</reference>
<accession>Q19626</accession>
<proteinExistence type="evidence at protein level"/>
<keyword id="KW-0067">ATP-binding</keyword>
<keyword id="KW-0375">Hydrogen ion transport</keyword>
<keyword id="KW-0406">Ion transport</keyword>
<keyword id="KW-0547">Nucleotide-binding</keyword>
<keyword id="KW-1185">Reference proteome</keyword>
<keyword id="KW-0813">Transport</keyword>
<evidence type="ECO:0000250" key="1">
    <source>
        <dbReference type="UniProtKB" id="P15313"/>
    </source>
</evidence>
<evidence type="ECO:0000250" key="2">
    <source>
        <dbReference type="UniProtKB" id="P21281"/>
    </source>
</evidence>
<evidence type="ECO:0000250" key="3">
    <source>
        <dbReference type="UniProtKB" id="P31408"/>
    </source>
</evidence>
<evidence type="ECO:0000269" key="4">
    <source>
    </source>
</evidence>
<evidence type="ECO:0000269" key="5">
    <source>
    </source>
</evidence>
<evidence type="ECO:0000269" key="6">
    <source>
    </source>
</evidence>
<evidence type="ECO:0000305" key="7"/>
<evidence type="ECO:0000305" key="8">
    <source>
    </source>
</evidence>
<evidence type="ECO:0000305" key="9">
    <source>
    </source>
</evidence>
<evidence type="ECO:0000312" key="10">
    <source>
        <dbReference type="WormBase" id="F20B6.2"/>
    </source>
</evidence>